<name>RTC5_YEAST</name>
<accession>Q12108</accession>
<accession>D6W2H7</accession>
<comment type="function">
    <text evidence="4">May be involved in a process influencing telomere capping.</text>
</comment>
<comment type="subcellular location">
    <subcellularLocation>
        <location evidence="2">Cytoplasm</location>
    </subcellularLocation>
</comment>
<comment type="miscellaneous">
    <text evidence="3">Present with 2600 molecules/cell in log phase SD medium.</text>
</comment>
<comment type="similarity">
    <text evidence="5">Belongs to the RTC5 family.</text>
</comment>
<protein>
    <recommendedName>
        <fullName>Restriction of telomere capping protein 5</fullName>
    </recommendedName>
</protein>
<reference key="1">
    <citation type="journal article" date="1997" name="Yeast">
        <title>DNA sequencing and analysis of 130 kb from yeast chromosome XV.</title>
        <authorList>
            <person name="Voss H."/>
            <person name="Benes V."/>
            <person name="Andrade M.A."/>
            <person name="Valencia A."/>
            <person name="Rechmann S."/>
            <person name="Teodoru C."/>
            <person name="Schwager C."/>
            <person name="Paces V."/>
            <person name="Sander C."/>
            <person name="Ansorge W."/>
        </authorList>
    </citation>
    <scope>NUCLEOTIDE SEQUENCE [GENOMIC DNA]</scope>
    <source>
        <strain>ATCC 96604 / S288c / FY1679</strain>
    </source>
</reference>
<reference key="2">
    <citation type="journal article" date="1996" name="Yeast">
        <title>Sequencing and analysis of 51 kb on the right arm of chromosome XV from Saccharomyces cerevisiae reveals 30 open reading frames.</title>
        <authorList>
            <person name="Wiemann S."/>
            <person name="Rechmann S."/>
            <person name="Benes V."/>
            <person name="Voss H."/>
            <person name="Schwager C."/>
            <person name="Vlcek C."/>
            <person name="Stegemann J."/>
            <person name="Zimmermann J."/>
            <person name="Erfle H."/>
            <person name="Paces V."/>
            <person name="Ansorge W."/>
        </authorList>
    </citation>
    <scope>NUCLEOTIDE SEQUENCE [GENOMIC DNA]</scope>
    <source>
        <strain>ATCC 96604 / S288c / FY1679</strain>
    </source>
</reference>
<reference key="3">
    <citation type="journal article" date="1997" name="Nature">
        <title>The nucleotide sequence of Saccharomyces cerevisiae chromosome XV.</title>
        <authorList>
            <person name="Dujon B."/>
            <person name="Albermann K."/>
            <person name="Aldea M."/>
            <person name="Alexandraki D."/>
            <person name="Ansorge W."/>
            <person name="Arino J."/>
            <person name="Benes V."/>
            <person name="Bohn C."/>
            <person name="Bolotin-Fukuhara M."/>
            <person name="Bordonne R."/>
            <person name="Boyer J."/>
            <person name="Camasses A."/>
            <person name="Casamayor A."/>
            <person name="Casas C."/>
            <person name="Cheret G."/>
            <person name="Cziepluch C."/>
            <person name="Daignan-Fornier B."/>
            <person name="Dang V.-D."/>
            <person name="de Haan M."/>
            <person name="Delius H."/>
            <person name="Durand P."/>
            <person name="Fairhead C."/>
            <person name="Feldmann H."/>
            <person name="Gaillon L."/>
            <person name="Galisson F."/>
            <person name="Gamo F.-J."/>
            <person name="Gancedo C."/>
            <person name="Goffeau A."/>
            <person name="Goulding S.E."/>
            <person name="Grivell L.A."/>
            <person name="Habbig B."/>
            <person name="Hand N.J."/>
            <person name="Hani J."/>
            <person name="Hattenhorst U."/>
            <person name="Hebling U."/>
            <person name="Hernando Y."/>
            <person name="Herrero E."/>
            <person name="Heumann K."/>
            <person name="Hiesel R."/>
            <person name="Hilger F."/>
            <person name="Hofmann B."/>
            <person name="Hollenberg C.P."/>
            <person name="Hughes B."/>
            <person name="Jauniaux J.-C."/>
            <person name="Kalogeropoulos A."/>
            <person name="Katsoulou C."/>
            <person name="Kordes E."/>
            <person name="Lafuente M.J."/>
            <person name="Landt O."/>
            <person name="Louis E.J."/>
            <person name="Maarse A.C."/>
            <person name="Madania A."/>
            <person name="Mannhaupt G."/>
            <person name="Marck C."/>
            <person name="Martin R.P."/>
            <person name="Mewes H.-W."/>
            <person name="Michaux G."/>
            <person name="Paces V."/>
            <person name="Parle-McDermott A.G."/>
            <person name="Pearson B.M."/>
            <person name="Perrin A."/>
            <person name="Pettersson B."/>
            <person name="Poch O."/>
            <person name="Pohl T.M."/>
            <person name="Poirey R."/>
            <person name="Portetelle D."/>
            <person name="Pujol A."/>
            <person name="Purnelle B."/>
            <person name="Ramezani Rad M."/>
            <person name="Rechmann S."/>
            <person name="Schwager C."/>
            <person name="Schweizer M."/>
            <person name="Sor F."/>
            <person name="Sterky F."/>
            <person name="Tarassov I.A."/>
            <person name="Teodoru C."/>
            <person name="Tettelin H."/>
            <person name="Thierry A."/>
            <person name="Tobiasch E."/>
            <person name="Tzermia M."/>
            <person name="Uhlen M."/>
            <person name="Unseld M."/>
            <person name="Valens M."/>
            <person name="Vandenbol M."/>
            <person name="Vetter I."/>
            <person name="Vlcek C."/>
            <person name="Voet M."/>
            <person name="Volckaert G."/>
            <person name="Voss H."/>
            <person name="Wambutt R."/>
            <person name="Wedler H."/>
            <person name="Wiemann S."/>
            <person name="Winsor B."/>
            <person name="Wolfe K.H."/>
            <person name="Zollner A."/>
            <person name="Zumstein E."/>
            <person name="Kleine K."/>
        </authorList>
    </citation>
    <scope>NUCLEOTIDE SEQUENCE [LARGE SCALE GENOMIC DNA]</scope>
    <source>
        <strain>ATCC 204508 / S288c</strain>
    </source>
</reference>
<reference key="4">
    <citation type="journal article" date="2014" name="G3 (Bethesda)">
        <title>The reference genome sequence of Saccharomyces cerevisiae: Then and now.</title>
        <authorList>
            <person name="Engel S.R."/>
            <person name="Dietrich F.S."/>
            <person name="Fisk D.G."/>
            <person name="Binkley G."/>
            <person name="Balakrishnan R."/>
            <person name="Costanzo M.C."/>
            <person name="Dwight S.S."/>
            <person name="Hitz B.C."/>
            <person name="Karra K."/>
            <person name="Nash R.S."/>
            <person name="Weng S."/>
            <person name="Wong E.D."/>
            <person name="Lloyd P."/>
            <person name="Skrzypek M.S."/>
            <person name="Miyasato S.R."/>
            <person name="Simison M."/>
            <person name="Cherry J.M."/>
        </authorList>
    </citation>
    <scope>GENOME REANNOTATION</scope>
    <source>
        <strain>ATCC 204508 / S288c</strain>
    </source>
</reference>
<reference key="5">
    <citation type="journal article" date="2003" name="Nature">
        <title>Global analysis of protein localization in budding yeast.</title>
        <authorList>
            <person name="Huh W.-K."/>
            <person name="Falvo J.V."/>
            <person name="Gerke L.C."/>
            <person name="Carroll A.S."/>
            <person name="Howson R.W."/>
            <person name="Weissman J.S."/>
            <person name="O'Shea E.K."/>
        </authorList>
    </citation>
    <scope>SUBCELLULAR LOCATION [LARGE SCALE ANALYSIS]</scope>
</reference>
<reference key="6">
    <citation type="journal article" date="2003" name="Nature">
        <title>Global analysis of protein expression in yeast.</title>
        <authorList>
            <person name="Ghaemmaghami S."/>
            <person name="Huh W.-K."/>
            <person name="Bower K."/>
            <person name="Howson R.W."/>
            <person name="Belle A."/>
            <person name="Dephoure N."/>
            <person name="O'Shea E.K."/>
            <person name="Weissman J.S."/>
        </authorList>
    </citation>
    <scope>LEVEL OF PROTEIN EXPRESSION [LARGE SCALE ANALYSIS]</scope>
</reference>
<reference key="7">
    <citation type="journal article" date="2008" name="Genetics">
        <title>A genomewide suppressor and enhancer analysis of cdc13-1 reveals varied cellular processes influencing telomere capping in Saccharomyces cerevisiae.</title>
        <authorList>
            <person name="Addinall S.G."/>
            <person name="Downey M."/>
            <person name="Yu M."/>
            <person name="Zubko M.K."/>
            <person name="Dewar J."/>
            <person name="Leake A."/>
            <person name="Hallinan J."/>
            <person name="Shaw O."/>
            <person name="James K."/>
            <person name="Wilkinson D.J."/>
            <person name="Wipat A."/>
            <person name="Durocher D."/>
            <person name="Lydall D."/>
        </authorList>
    </citation>
    <scope>FUNCTION</scope>
</reference>
<evidence type="ECO:0000255" key="1">
    <source>
        <dbReference type="PROSITE-ProRule" id="PRU01234"/>
    </source>
</evidence>
<evidence type="ECO:0000269" key="2">
    <source>
    </source>
</evidence>
<evidence type="ECO:0000269" key="3">
    <source>
    </source>
</evidence>
<evidence type="ECO:0000269" key="4">
    <source>
    </source>
</evidence>
<evidence type="ECO:0000305" key="5"/>
<proteinExistence type="evidence at protein level"/>
<feature type="chain" id="PRO_0000237657" description="Restriction of telomere capping protein 5">
    <location>
        <begin position="1"/>
        <end position="567"/>
    </location>
</feature>
<feature type="domain" description="TLDc" evidence="1">
    <location>
        <begin position="289"/>
        <end position="515"/>
    </location>
</feature>
<keyword id="KW-0963">Cytoplasm</keyword>
<keyword id="KW-1185">Reference proteome</keyword>
<dbReference type="EMBL" id="X94335">
    <property type="protein sequence ID" value="CAA64038.1"/>
    <property type="molecule type" value="Genomic_DNA"/>
</dbReference>
<dbReference type="EMBL" id="X90518">
    <property type="protein sequence ID" value="CAA62106.1"/>
    <property type="molecule type" value="Genomic_DNA"/>
</dbReference>
<dbReference type="EMBL" id="Z75026">
    <property type="protein sequence ID" value="CAA99316.1"/>
    <property type="molecule type" value="Genomic_DNA"/>
</dbReference>
<dbReference type="EMBL" id="BK006948">
    <property type="protein sequence ID" value="DAA10893.1"/>
    <property type="molecule type" value="Genomic_DNA"/>
</dbReference>
<dbReference type="PIR" id="S60985">
    <property type="entry name" value="S60985"/>
</dbReference>
<dbReference type="RefSeq" id="NP_014761.1">
    <property type="nucleotide sequence ID" value="NM_001183537.1"/>
</dbReference>
<dbReference type="SMR" id="Q12108"/>
<dbReference type="BioGRID" id="34514">
    <property type="interactions" value="43"/>
</dbReference>
<dbReference type="DIP" id="DIP-5512N"/>
<dbReference type="FunCoup" id="Q12108">
    <property type="interactions" value="26"/>
</dbReference>
<dbReference type="IntAct" id="Q12108">
    <property type="interactions" value="11"/>
</dbReference>
<dbReference type="MINT" id="Q12108"/>
<dbReference type="STRING" id="4932.YOR118W"/>
<dbReference type="iPTMnet" id="Q12108"/>
<dbReference type="PaxDb" id="4932-YOR118W"/>
<dbReference type="PeptideAtlas" id="Q12108"/>
<dbReference type="EnsemblFungi" id="YOR118W_mRNA">
    <property type="protein sequence ID" value="YOR118W"/>
    <property type="gene ID" value="YOR118W"/>
</dbReference>
<dbReference type="GeneID" id="854285"/>
<dbReference type="KEGG" id="sce:YOR118W"/>
<dbReference type="AGR" id="SGD:S000005644"/>
<dbReference type="SGD" id="S000005644">
    <property type="gene designation" value="RTC5"/>
</dbReference>
<dbReference type="VEuPathDB" id="FungiDB:YOR118W"/>
<dbReference type="eggNOG" id="ENOG502QV3R">
    <property type="taxonomic scope" value="Eukaryota"/>
</dbReference>
<dbReference type="HOGENOM" id="CLU_011918_1_0_1"/>
<dbReference type="InParanoid" id="Q12108"/>
<dbReference type="OMA" id="KWEFEAR"/>
<dbReference type="OrthoDB" id="289228at2759"/>
<dbReference type="BioCyc" id="YEAST:G3O-33647-MONOMER"/>
<dbReference type="BioGRID-ORCS" id="854285">
    <property type="hits" value="0 hits in 10 CRISPR screens"/>
</dbReference>
<dbReference type="PRO" id="PR:Q12108"/>
<dbReference type="Proteomes" id="UP000002311">
    <property type="component" value="Chromosome XV"/>
</dbReference>
<dbReference type="RNAct" id="Q12108">
    <property type="molecule type" value="protein"/>
</dbReference>
<dbReference type="GO" id="GO:0005737">
    <property type="term" value="C:cytoplasm"/>
    <property type="evidence" value="ECO:0007005"/>
    <property type="project" value="SGD"/>
</dbReference>
<dbReference type="GO" id="GO:0000329">
    <property type="term" value="C:fungal-type vacuole membrane"/>
    <property type="evidence" value="ECO:0000314"/>
    <property type="project" value="SGD"/>
</dbReference>
<dbReference type="GO" id="GO:0005634">
    <property type="term" value="C:nucleus"/>
    <property type="evidence" value="ECO:0000318"/>
    <property type="project" value="GO_Central"/>
</dbReference>
<dbReference type="GO" id="GO:0032984">
    <property type="term" value="P:protein-containing complex disassembly"/>
    <property type="evidence" value="ECO:0000315"/>
    <property type="project" value="SGD"/>
</dbReference>
<dbReference type="GO" id="GO:0006979">
    <property type="term" value="P:response to oxidative stress"/>
    <property type="evidence" value="ECO:0000318"/>
    <property type="project" value="GO_Central"/>
</dbReference>
<dbReference type="InterPro" id="IPR006571">
    <property type="entry name" value="TLDc_dom"/>
</dbReference>
<dbReference type="PANTHER" id="PTHR23354">
    <property type="entry name" value="NUCLEOLAR PROTEIN 7/ESTROGEN RECEPTOR COACTIVATOR-RELATED"/>
    <property type="match status" value="1"/>
</dbReference>
<dbReference type="PANTHER" id="PTHR23354:SF130">
    <property type="entry name" value="RESTRICTION OF TELOMERE CAPPING PROTEIN 5"/>
    <property type="match status" value="1"/>
</dbReference>
<dbReference type="Pfam" id="PF07534">
    <property type="entry name" value="TLD"/>
    <property type="match status" value="1"/>
</dbReference>
<dbReference type="SMART" id="SM00584">
    <property type="entry name" value="TLDc"/>
    <property type="match status" value="1"/>
</dbReference>
<dbReference type="PROSITE" id="PS51886">
    <property type="entry name" value="TLDC"/>
    <property type="match status" value="1"/>
</dbReference>
<gene>
    <name type="primary">RTC5</name>
    <name type="ordered locus">YOR118W</name>
    <name type="ORF">O3263</name>
    <name type="ORF">YOR3263w</name>
</gene>
<sequence length="567" mass="64294">MGQSSSISSSNEEGSSHSKKFTNSKDILAYFNNKAQQQVTIPELVSFKGNLQIEDLNTPISHKALCNSLYFPQNHAMIVGIVTNMLRVLSNFPLMKSSYEPITGYGLLKCILLLNRARCAKFLKTKSYDQLKLLFISLSLQKTDKEELSEESENDGNKELTIKQIITGFDDVDTEMLCIPADFMLQFLTWLLILTVDCPTTNSKLDNTETHDQWGNFKVSALNLLRTMNPDVVGDIESHSITFQQFSTAIRTVMPNLLKPLENLMEHFFYLQHDLVDHDTNLSSIQDSKVMTPALLAQLSTGLPKELFIHKLQSLYIGRKSGFSMRSLQAKVFKWMAPSILVVSGMRITNSEEYAAEKNPRYRHFLEEFPKLKESDQMMDASHLNKRKTTFAVYIDDPWKVTNKDYFGDLNTRIIEISPRQDIYKVNQKGTIYFNTIGGGIGIGDKQPLIKPASKRYIPGNVSLTFDSTLEFAVFRNTGYGGSLDPGLLSMERKEENSPYELHFLIQDVEVWGCGGEKELEEQIKQLEWEEAESKRRQQINLRSLGEDRALLEMAGLVGQHQGGGSM</sequence>
<organism>
    <name type="scientific">Saccharomyces cerevisiae (strain ATCC 204508 / S288c)</name>
    <name type="common">Baker's yeast</name>
    <dbReference type="NCBI Taxonomy" id="559292"/>
    <lineage>
        <taxon>Eukaryota</taxon>
        <taxon>Fungi</taxon>
        <taxon>Dikarya</taxon>
        <taxon>Ascomycota</taxon>
        <taxon>Saccharomycotina</taxon>
        <taxon>Saccharomycetes</taxon>
        <taxon>Saccharomycetales</taxon>
        <taxon>Saccharomycetaceae</taxon>
        <taxon>Saccharomyces</taxon>
    </lineage>
</organism>